<comment type="function">
    <text evidence="1">The glycine cleavage system catalyzes the degradation of glycine. The P protein binds the alpha-amino group of glycine through its pyridoxal phosphate cofactor; CO(2) is released and the remaining methylamine moiety is then transferred to the lipoamide cofactor of the H protein.</text>
</comment>
<comment type="catalytic activity">
    <reaction evidence="1">
        <text>N(6)-[(R)-lipoyl]-L-lysyl-[glycine-cleavage complex H protein] + glycine + H(+) = N(6)-[(R)-S(8)-aminomethyldihydrolipoyl]-L-lysyl-[glycine-cleavage complex H protein] + CO2</text>
        <dbReference type="Rhea" id="RHEA:24304"/>
        <dbReference type="Rhea" id="RHEA-COMP:10494"/>
        <dbReference type="Rhea" id="RHEA-COMP:10495"/>
        <dbReference type="ChEBI" id="CHEBI:15378"/>
        <dbReference type="ChEBI" id="CHEBI:16526"/>
        <dbReference type="ChEBI" id="CHEBI:57305"/>
        <dbReference type="ChEBI" id="CHEBI:83099"/>
        <dbReference type="ChEBI" id="CHEBI:83143"/>
        <dbReference type="EC" id="1.4.4.2"/>
    </reaction>
</comment>
<comment type="cofactor">
    <cofactor evidence="1">
        <name>pyridoxal 5'-phosphate</name>
        <dbReference type="ChEBI" id="CHEBI:597326"/>
    </cofactor>
</comment>
<comment type="subunit">
    <text evidence="1">The glycine cleavage system is composed of four proteins: P, T, L and H. In this organism, the P 'protein' is a heterodimer of two subunits.</text>
</comment>
<comment type="similarity">
    <text evidence="1">Belongs to the GcvP family. C-terminal subunit subfamily.</text>
</comment>
<keyword id="KW-0560">Oxidoreductase</keyword>
<keyword id="KW-0663">Pyridoxal phosphate</keyword>
<feature type="chain" id="PRO_1000083229" description="Probable glycine dehydrogenase (decarboxylating) subunit 2">
    <location>
        <begin position="1"/>
        <end position="491"/>
    </location>
</feature>
<feature type="modified residue" description="N6-(pyridoxal phosphate)lysine" evidence="1">
    <location>
        <position position="264"/>
    </location>
</feature>
<proteinExistence type="inferred from homology"/>
<protein>
    <recommendedName>
        <fullName evidence="1">Probable glycine dehydrogenase (decarboxylating) subunit 2</fullName>
        <ecNumber evidence="1">1.4.4.2</ecNumber>
    </recommendedName>
    <alternativeName>
        <fullName evidence="1">Glycine cleavage system P-protein subunit 2</fullName>
    </alternativeName>
    <alternativeName>
        <fullName evidence="1">Glycine decarboxylase subunit 2</fullName>
    </alternativeName>
    <alternativeName>
        <fullName evidence="1">Glycine dehydrogenase (aminomethyl-transferring) subunit 2</fullName>
    </alternativeName>
</protein>
<name>GCSPB_COXBR</name>
<accession>A9NA76</accession>
<sequence length="491" mass="54619">MLIFEKSRKNRRTLAHAIADKMDANDIPANLLRHDAPRLPELSELEVVRHFTRLSTQNFSIDTHFYPLGSCTMKYNPRAANRLASLPGYLKRHPLSPAPQSQAFLQCLYELQTMLTEITGMEKISLTSMAGAQGEFAGVAMIKAYHESRGDYDRTEMIVPDAAHGTNPASAAMCGFTVKEISTTKDGDIDLEKLRQMAGAKTAGIMLTNPSTLGVFERQISEVAKIIHNAGGLLYYDGANLNAILGKYRPGDMGFDVMHLNLHKTFATPHGGGGPGAGPVAAGPRLSKFLPVPMVGKNKEGYDWLTEKECPKSIGRLSAFMGNSGVLLRAYIYLRLLGKEGLSRVAEFSTLNANYLMKRLEQLGFTLAFPNRRASHEFIITLKPLTRAYGVTALDIAKRLLDYGFHAPTIYFPLLVPECLLIEPTETESKQTLDHFIEAMEKILTEIKTTPDLLRNAPHQQLINRLDEVKAARELDLRWYPIAKETEIFIQ</sequence>
<evidence type="ECO:0000255" key="1">
    <source>
        <dbReference type="HAMAP-Rule" id="MF_00713"/>
    </source>
</evidence>
<gene>
    <name evidence="1" type="primary">gcvPB</name>
    <name type="ordered locus">COXBURSA331_A1900</name>
</gene>
<reference key="1">
    <citation type="submission" date="2007-11" db="EMBL/GenBank/DDBJ databases">
        <title>Genome sequencing of phylogenetically and phenotypically diverse Coxiella burnetii isolates.</title>
        <authorList>
            <person name="Seshadri R."/>
            <person name="Samuel J.E."/>
        </authorList>
    </citation>
    <scope>NUCLEOTIDE SEQUENCE [LARGE SCALE GENOMIC DNA]</scope>
    <source>
        <strain>RSA 331 / Henzerling II</strain>
    </source>
</reference>
<organism>
    <name type="scientific">Coxiella burnetii (strain RSA 331 / Henzerling II)</name>
    <dbReference type="NCBI Taxonomy" id="360115"/>
    <lineage>
        <taxon>Bacteria</taxon>
        <taxon>Pseudomonadati</taxon>
        <taxon>Pseudomonadota</taxon>
        <taxon>Gammaproteobacteria</taxon>
        <taxon>Legionellales</taxon>
        <taxon>Coxiellaceae</taxon>
        <taxon>Coxiella</taxon>
    </lineage>
</organism>
<dbReference type="EC" id="1.4.4.2" evidence="1"/>
<dbReference type="EMBL" id="CP000890">
    <property type="protein sequence ID" value="ABX77297.1"/>
    <property type="molecule type" value="Genomic_DNA"/>
</dbReference>
<dbReference type="RefSeq" id="WP_010958389.1">
    <property type="nucleotide sequence ID" value="NC_010117.1"/>
</dbReference>
<dbReference type="SMR" id="A9NA76"/>
<dbReference type="KEGG" id="cbs:COXBURSA331_A1900"/>
<dbReference type="HOGENOM" id="CLU_004620_5_0_6"/>
<dbReference type="GO" id="GO:0005829">
    <property type="term" value="C:cytosol"/>
    <property type="evidence" value="ECO:0007669"/>
    <property type="project" value="TreeGrafter"/>
</dbReference>
<dbReference type="GO" id="GO:0005960">
    <property type="term" value="C:glycine cleavage complex"/>
    <property type="evidence" value="ECO:0007669"/>
    <property type="project" value="TreeGrafter"/>
</dbReference>
<dbReference type="GO" id="GO:0016594">
    <property type="term" value="F:glycine binding"/>
    <property type="evidence" value="ECO:0007669"/>
    <property type="project" value="TreeGrafter"/>
</dbReference>
<dbReference type="GO" id="GO:0004375">
    <property type="term" value="F:glycine dehydrogenase (decarboxylating) activity"/>
    <property type="evidence" value="ECO:0007669"/>
    <property type="project" value="UniProtKB-EC"/>
</dbReference>
<dbReference type="GO" id="GO:0030170">
    <property type="term" value="F:pyridoxal phosphate binding"/>
    <property type="evidence" value="ECO:0007669"/>
    <property type="project" value="TreeGrafter"/>
</dbReference>
<dbReference type="GO" id="GO:0019464">
    <property type="term" value="P:glycine decarboxylation via glycine cleavage system"/>
    <property type="evidence" value="ECO:0007669"/>
    <property type="project" value="UniProtKB-UniRule"/>
</dbReference>
<dbReference type="CDD" id="cd00613">
    <property type="entry name" value="GDC-P"/>
    <property type="match status" value="1"/>
</dbReference>
<dbReference type="FunFam" id="3.40.640.10:FF:000034">
    <property type="entry name" value="Probable glycine dehydrogenase (decarboxylating) subunit 2"/>
    <property type="match status" value="1"/>
</dbReference>
<dbReference type="FunFam" id="3.90.1150.10:FF:000014">
    <property type="entry name" value="Probable glycine dehydrogenase (decarboxylating) subunit 2"/>
    <property type="match status" value="1"/>
</dbReference>
<dbReference type="Gene3D" id="6.20.440.10">
    <property type="match status" value="1"/>
</dbReference>
<dbReference type="Gene3D" id="3.90.1150.10">
    <property type="entry name" value="Aspartate Aminotransferase, domain 1"/>
    <property type="match status" value="1"/>
</dbReference>
<dbReference type="Gene3D" id="3.40.640.10">
    <property type="entry name" value="Type I PLP-dependent aspartate aminotransferase-like (Major domain)"/>
    <property type="match status" value="1"/>
</dbReference>
<dbReference type="HAMAP" id="MF_00713">
    <property type="entry name" value="GcvPB"/>
    <property type="match status" value="1"/>
</dbReference>
<dbReference type="InterPro" id="IPR023012">
    <property type="entry name" value="GcvPB"/>
</dbReference>
<dbReference type="InterPro" id="IPR049316">
    <property type="entry name" value="GDC-P_C"/>
</dbReference>
<dbReference type="InterPro" id="IPR049315">
    <property type="entry name" value="GDC-P_N"/>
</dbReference>
<dbReference type="InterPro" id="IPR020581">
    <property type="entry name" value="GDC_P"/>
</dbReference>
<dbReference type="InterPro" id="IPR015424">
    <property type="entry name" value="PyrdxlP-dep_Trfase"/>
</dbReference>
<dbReference type="InterPro" id="IPR015421">
    <property type="entry name" value="PyrdxlP-dep_Trfase_major"/>
</dbReference>
<dbReference type="InterPro" id="IPR015422">
    <property type="entry name" value="PyrdxlP-dep_Trfase_small"/>
</dbReference>
<dbReference type="NCBIfam" id="NF003346">
    <property type="entry name" value="PRK04366.1"/>
    <property type="match status" value="1"/>
</dbReference>
<dbReference type="PANTHER" id="PTHR11773:SF1">
    <property type="entry name" value="GLYCINE DEHYDROGENASE (DECARBOXYLATING), MITOCHONDRIAL"/>
    <property type="match status" value="1"/>
</dbReference>
<dbReference type="PANTHER" id="PTHR11773">
    <property type="entry name" value="GLYCINE DEHYDROGENASE, DECARBOXYLATING"/>
    <property type="match status" value="1"/>
</dbReference>
<dbReference type="Pfam" id="PF21478">
    <property type="entry name" value="GcvP2_C"/>
    <property type="match status" value="1"/>
</dbReference>
<dbReference type="Pfam" id="PF02347">
    <property type="entry name" value="GDC-P"/>
    <property type="match status" value="1"/>
</dbReference>
<dbReference type="SUPFAM" id="SSF53383">
    <property type="entry name" value="PLP-dependent transferases"/>
    <property type="match status" value="1"/>
</dbReference>